<keyword id="KW-0456">Lyase</keyword>
<keyword id="KW-1185">Reference proteome</keyword>
<protein>
    <recommendedName>
        <fullName evidence="1">Putative pterin-4-alpha-carbinolamine dehydratase</fullName>
        <shortName evidence="1">PHS</shortName>
        <ecNumber evidence="1">4.2.1.96</ecNumber>
    </recommendedName>
    <alternativeName>
        <fullName evidence="1">4-alpha-hydroxy-tetrahydropterin dehydratase</fullName>
    </alternativeName>
    <alternativeName>
        <fullName evidence="1">Pterin carbinolamine dehydratase</fullName>
        <shortName evidence="1">PCD</shortName>
    </alternativeName>
</protein>
<name>PHS_THERP</name>
<organism>
    <name type="scientific">Thermomicrobium roseum (strain ATCC 27502 / DSM 5159 / P-2)</name>
    <dbReference type="NCBI Taxonomy" id="309801"/>
    <lineage>
        <taxon>Bacteria</taxon>
        <taxon>Pseudomonadati</taxon>
        <taxon>Thermomicrobiota</taxon>
        <taxon>Thermomicrobia</taxon>
        <taxon>Thermomicrobiales</taxon>
        <taxon>Thermomicrobiaceae</taxon>
        <taxon>Thermomicrobium</taxon>
    </lineage>
</organism>
<evidence type="ECO:0000255" key="1">
    <source>
        <dbReference type="HAMAP-Rule" id="MF_00434"/>
    </source>
</evidence>
<gene>
    <name type="ordered locus">trd_1889</name>
</gene>
<reference key="1">
    <citation type="journal article" date="2009" name="PLoS ONE">
        <title>Complete genome sequence of the aerobic CO-oxidizing thermophile Thermomicrobium roseum.</title>
        <authorList>
            <person name="Wu D."/>
            <person name="Raymond J."/>
            <person name="Wu M."/>
            <person name="Chatterji S."/>
            <person name="Ren Q."/>
            <person name="Graham J.E."/>
            <person name="Bryant D.A."/>
            <person name="Robb F."/>
            <person name="Colman A."/>
            <person name="Tallon L.J."/>
            <person name="Badger J.H."/>
            <person name="Madupu R."/>
            <person name="Ward N.L."/>
            <person name="Eisen J.A."/>
        </authorList>
    </citation>
    <scope>NUCLEOTIDE SEQUENCE [LARGE SCALE GENOMIC DNA]</scope>
    <source>
        <strain>ATCC 27502 / DSM 5159 / P-2</strain>
    </source>
</reference>
<sequence>MARLDDATIASLLQEIPGWERQGDALVRTYVFKNFREAMAFVNRVAELAEEARHHPDITIRYNRVHLLLTTHEAGGITERDIALARKLAELAS</sequence>
<comment type="catalytic activity">
    <reaction evidence="1">
        <text>(4aS,6R)-4a-hydroxy-L-erythro-5,6,7,8-tetrahydrobiopterin = (6R)-L-erythro-6,7-dihydrobiopterin + H2O</text>
        <dbReference type="Rhea" id="RHEA:11920"/>
        <dbReference type="ChEBI" id="CHEBI:15377"/>
        <dbReference type="ChEBI" id="CHEBI:15642"/>
        <dbReference type="ChEBI" id="CHEBI:43120"/>
        <dbReference type="EC" id="4.2.1.96"/>
    </reaction>
</comment>
<comment type="similarity">
    <text evidence="1">Belongs to the pterin-4-alpha-carbinolamine dehydratase family.</text>
</comment>
<accession>B9L1Y8</accession>
<proteinExistence type="inferred from homology"/>
<dbReference type="EC" id="4.2.1.96" evidence="1"/>
<dbReference type="EMBL" id="CP001275">
    <property type="protein sequence ID" value="ACM05491.1"/>
    <property type="molecule type" value="Genomic_DNA"/>
</dbReference>
<dbReference type="RefSeq" id="WP_015922830.1">
    <property type="nucleotide sequence ID" value="NC_011959.1"/>
</dbReference>
<dbReference type="SMR" id="B9L1Y8"/>
<dbReference type="KEGG" id="tro:trd_1889"/>
<dbReference type="eggNOG" id="COG2154">
    <property type="taxonomic scope" value="Bacteria"/>
</dbReference>
<dbReference type="HOGENOM" id="CLU_081974_4_3_0"/>
<dbReference type="OrthoDB" id="9800108at2"/>
<dbReference type="Proteomes" id="UP000000447">
    <property type="component" value="Chromosome"/>
</dbReference>
<dbReference type="GO" id="GO:0008124">
    <property type="term" value="F:4-alpha-hydroxytetrahydrobiopterin dehydratase activity"/>
    <property type="evidence" value="ECO:0007669"/>
    <property type="project" value="UniProtKB-UniRule"/>
</dbReference>
<dbReference type="GO" id="GO:0006729">
    <property type="term" value="P:tetrahydrobiopterin biosynthetic process"/>
    <property type="evidence" value="ECO:0007669"/>
    <property type="project" value="InterPro"/>
</dbReference>
<dbReference type="CDD" id="cd00488">
    <property type="entry name" value="PCD_DCoH"/>
    <property type="match status" value="1"/>
</dbReference>
<dbReference type="Gene3D" id="3.30.1360.20">
    <property type="entry name" value="Transcriptional coactivator/pterin dehydratase"/>
    <property type="match status" value="1"/>
</dbReference>
<dbReference type="HAMAP" id="MF_00434">
    <property type="entry name" value="Pterin_4_alpha"/>
    <property type="match status" value="1"/>
</dbReference>
<dbReference type="InterPro" id="IPR036428">
    <property type="entry name" value="PCD_sf"/>
</dbReference>
<dbReference type="InterPro" id="IPR001533">
    <property type="entry name" value="Pterin_deHydtase"/>
</dbReference>
<dbReference type="NCBIfam" id="NF002017">
    <property type="entry name" value="PRK00823.1-2"/>
    <property type="match status" value="1"/>
</dbReference>
<dbReference type="PANTHER" id="PTHR12599">
    <property type="entry name" value="PTERIN-4-ALPHA-CARBINOLAMINE DEHYDRATASE"/>
    <property type="match status" value="1"/>
</dbReference>
<dbReference type="PANTHER" id="PTHR12599:SF0">
    <property type="entry name" value="PTERIN-4-ALPHA-CARBINOLAMINE DEHYDRATASE"/>
    <property type="match status" value="1"/>
</dbReference>
<dbReference type="Pfam" id="PF01329">
    <property type="entry name" value="Pterin_4a"/>
    <property type="match status" value="1"/>
</dbReference>
<dbReference type="SUPFAM" id="SSF55248">
    <property type="entry name" value="PCD-like"/>
    <property type="match status" value="1"/>
</dbReference>
<feature type="chain" id="PRO_1000206074" description="Putative pterin-4-alpha-carbinolamine dehydratase">
    <location>
        <begin position="1"/>
        <end position="93"/>
    </location>
</feature>